<sequence length="448" mass="48819">MKVRIRGIFATALTKLALDWGFSIVQPTGKIVERFDLPVDNSPPDVTVIDHESKSGVVVLGKCGAVEAFVERLREAVDPVVVKADLGVHDVFVGKVVGEGRVEGPGGIVLRVPPRFAPTVGSVGVFTVVRPPLGPVEGVAVPDIIVEGDYVELSTSPGVRFSRHIPEGERVRLRLLAETRLGWLGGLGVRFKSSARFAEDEAVVREAEALYRELVELAKGGEAGAVLRRGRCLALALFDKAAKERLDEVRRSVVPTARGHHALRAQGLGKCLDLLDYLGVEAYERAAEFLARGAVEIWHIKPWGEMVKMRGEAVGVFGDWLVVKRPLRPGGVLDGIGVKIERGFYALTCVPRRGNYVVHTYYTPEGRAVGTYINVNSEPEWGRRIIYIDLLVDVAYVGGEAKVLDLEEYRRYEDVFPARLRPPSGVLSPPVACGERGIIEAPPQSASS</sequence>
<gene>
    <name evidence="1" type="primary">fau-1</name>
    <name type="ordered locus">Pcal_2040</name>
</gene>
<feature type="chain" id="PRO_0000334204" description="Probable ribonuclease FAU-1">
    <location>
        <begin position="1"/>
        <end position="448"/>
    </location>
</feature>
<organism>
    <name type="scientific">Pyrobaculum calidifontis (strain DSM 21063 / JCM 11548 / VA1)</name>
    <dbReference type="NCBI Taxonomy" id="410359"/>
    <lineage>
        <taxon>Archaea</taxon>
        <taxon>Thermoproteota</taxon>
        <taxon>Thermoprotei</taxon>
        <taxon>Thermoproteales</taxon>
        <taxon>Thermoproteaceae</taxon>
        <taxon>Pyrobaculum</taxon>
    </lineage>
</organism>
<name>FAU1_PYRCJ</name>
<reference key="1">
    <citation type="submission" date="2007-02" db="EMBL/GenBank/DDBJ databases">
        <title>Complete sequence of Pyrobaculum calidifontis JCM 11548.</title>
        <authorList>
            <consortium name="US DOE Joint Genome Institute"/>
            <person name="Copeland A."/>
            <person name="Lucas S."/>
            <person name="Lapidus A."/>
            <person name="Barry K."/>
            <person name="Glavina del Rio T."/>
            <person name="Dalin E."/>
            <person name="Tice H."/>
            <person name="Pitluck S."/>
            <person name="Chain P."/>
            <person name="Malfatti S."/>
            <person name="Shin M."/>
            <person name="Vergez L."/>
            <person name="Schmutz J."/>
            <person name="Larimer F."/>
            <person name="Land M."/>
            <person name="Hauser L."/>
            <person name="Kyrpides N."/>
            <person name="Mikhailova N."/>
            <person name="Cozen A.E."/>
            <person name="Fitz-Gibbon S.T."/>
            <person name="House C.H."/>
            <person name="Saltikov C."/>
            <person name="Lowe T.M."/>
            <person name="Richardson P."/>
        </authorList>
    </citation>
    <scope>NUCLEOTIDE SEQUENCE [LARGE SCALE GENOMIC DNA]</scope>
    <source>
        <strain>DSM 21063 / JCM 11548 / VA1</strain>
    </source>
</reference>
<dbReference type="EC" id="3.1.26.-" evidence="1"/>
<dbReference type="EMBL" id="CP000561">
    <property type="protein sequence ID" value="ABO09455.1"/>
    <property type="molecule type" value="Genomic_DNA"/>
</dbReference>
<dbReference type="RefSeq" id="WP_011850713.1">
    <property type="nucleotide sequence ID" value="NC_009073.1"/>
</dbReference>
<dbReference type="SMR" id="A3MXT8"/>
<dbReference type="STRING" id="410359.Pcal_2040"/>
<dbReference type="GeneID" id="4909490"/>
<dbReference type="KEGG" id="pcl:Pcal_2040"/>
<dbReference type="eggNOG" id="arCOG04307">
    <property type="taxonomic scope" value="Archaea"/>
</dbReference>
<dbReference type="HOGENOM" id="CLU_044303_0_0_2"/>
<dbReference type="OrthoDB" id="84798at2157"/>
<dbReference type="Proteomes" id="UP000001431">
    <property type="component" value="Chromosome"/>
</dbReference>
<dbReference type="GO" id="GO:0035925">
    <property type="term" value="F:mRNA 3'-UTR AU-rich region binding"/>
    <property type="evidence" value="ECO:0007669"/>
    <property type="project" value="UniProtKB-UniRule"/>
</dbReference>
<dbReference type="GO" id="GO:0016891">
    <property type="term" value="F:RNA endonuclease activity, producing 5'-phosphomonoesters"/>
    <property type="evidence" value="ECO:0007669"/>
    <property type="project" value="UniProtKB-UniRule"/>
</dbReference>
<dbReference type="GO" id="GO:0006364">
    <property type="term" value="P:rRNA processing"/>
    <property type="evidence" value="ECO:0007669"/>
    <property type="project" value="UniProtKB-UniRule"/>
</dbReference>
<dbReference type="Gene3D" id="2.40.380.10">
    <property type="entry name" value="FomD-like"/>
    <property type="match status" value="1"/>
</dbReference>
<dbReference type="HAMAP" id="MF_01910">
    <property type="entry name" value="RNA_binding_AU_1"/>
    <property type="match status" value="1"/>
</dbReference>
<dbReference type="InterPro" id="IPR007295">
    <property type="entry name" value="DUF402"/>
</dbReference>
<dbReference type="InterPro" id="IPR035930">
    <property type="entry name" value="FomD-like_sf"/>
</dbReference>
<dbReference type="InterPro" id="IPR050212">
    <property type="entry name" value="Ntdp-like"/>
</dbReference>
<dbReference type="InterPro" id="IPR016730">
    <property type="entry name" value="RNA-bd_FAU-1"/>
</dbReference>
<dbReference type="PANTHER" id="PTHR39159">
    <property type="match status" value="1"/>
</dbReference>
<dbReference type="PANTHER" id="PTHR39159:SF1">
    <property type="entry name" value="UPF0374 PROTEIN YGAC"/>
    <property type="match status" value="1"/>
</dbReference>
<dbReference type="Pfam" id="PF04167">
    <property type="entry name" value="DUF402"/>
    <property type="match status" value="1"/>
</dbReference>
<dbReference type="SUPFAM" id="SSF159234">
    <property type="entry name" value="FomD-like"/>
    <property type="match status" value="1"/>
</dbReference>
<comment type="function">
    <text evidence="1">Probable RNase involved in rRNA stability through maturation and/or degradation of precursor rRNAs. Binds to RNA in loop regions with AU-rich sequences.</text>
</comment>
<comment type="similarity">
    <text evidence="1">Belongs to the FAU-1 family.</text>
</comment>
<proteinExistence type="inferred from homology"/>
<accession>A3MXT8</accession>
<keyword id="KW-0255">Endonuclease</keyword>
<keyword id="KW-0378">Hydrolase</keyword>
<keyword id="KW-0540">Nuclease</keyword>
<keyword id="KW-0694">RNA-binding</keyword>
<keyword id="KW-0698">rRNA processing</keyword>
<evidence type="ECO:0000255" key="1">
    <source>
        <dbReference type="HAMAP-Rule" id="MF_01910"/>
    </source>
</evidence>
<protein>
    <recommendedName>
        <fullName evidence="1">Probable ribonuclease FAU-1</fullName>
        <ecNumber evidence="1">3.1.26.-</ecNumber>
    </recommendedName>
    <alternativeName>
        <fullName evidence="1">RNA-binding protein FAU-1</fullName>
    </alternativeName>
</protein>